<comment type="function">
    <text evidence="1">Activates expression of the rhaSR operon in response to L-rhamnose.</text>
</comment>
<comment type="subunit">
    <text evidence="1">Binds DNA as a dimer.</text>
</comment>
<comment type="subcellular location">
    <subcellularLocation>
        <location evidence="1">Cytoplasm</location>
    </subcellularLocation>
</comment>
<comment type="sequence caution" evidence="2">
    <conflict type="erroneous initiation">
        <sequence resource="EMBL-CDS" id="ABB63784"/>
    </conflict>
</comment>
<accession>Q32A71</accession>
<dbReference type="EMBL" id="CP000034">
    <property type="protein sequence ID" value="ABB63784.1"/>
    <property type="status" value="ALT_INIT"/>
    <property type="molecule type" value="Genomic_DNA"/>
</dbReference>
<dbReference type="RefSeq" id="WP_005015730.1">
    <property type="nucleotide sequence ID" value="NC_007606.1"/>
</dbReference>
<dbReference type="RefSeq" id="YP_405275.1">
    <property type="nucleotide sequence ID" value="NC_007606.1"/>
</dbReference>
<dbReference type="SMR" id="Q32A71"/>
<dbReference type="STRING" id="300267.SDY_3840"/>
<dbReference type="EnsemblBacteria" id="ABB63784">
    <property type="protein sequence ID" value="ABB63784"/>
    <property type="gene ID" value="SDY_3840"/>
</dbReference>
<dbReference type="KEGG" id="sdy:SDY_3840"/>
<dbReference type="PATRIC" id="fig|300267.13.peg.4535"/>
<dbReference type="HOGENOM" id="CLU_000445_88_5_6"/>
<dbReference type="Proteomes" id="UP000002716">
    <property type="component" value="Chromosome"/>
</dbReference>
<dbReference type="GO" id="GO:0005737">
    <property type="term" value="C:cytoplasm"/>
    <property type="evidence" value="ECO:0007669"/>
    <property type="project" value="UniProtKB-SubCell"/>
</dbReference>
<dbReference type="GO" id="GO:0003700">
    <property type="term" value="F:DNA-binding transcription factor activity"/>
    <property type="evidence" value="ECO:0007669"/>
    <property type="project" value="UniProtKB-UniRule"/>
</dbReference>
<dbReference type="GO" id="GO:0043565">
    <property type="term" value="F:sequence-specific DNA binding"/>
    <property type="evidence" value="ECO:0007669"/>
    <property type="project" value="InterPro"/>
</dbReference>
<dbReference type="GO" id="GO:0045893">
    <property type="term" value="P:positive regulation of DNA-templated transcription"/>
    <property type="evidence" value="ECO:0007669"/>
    <property type="project" value="UniProtKB-UniRule"/>
</dbReference>
<dbReference type="GO" id="GO:0019299">
    <property type="term" value="P:rhamnose metabolic process"/>
    <property type="evidence" value="ECO:0007669"/>
    <property type="project" value="UniProtKB-UniRule"/>
</dbReference>
<dbReference type="CDD" id="cd06977">
    <property type="entry name" value="cupin_RhaR_RhaS-like_N"/>
    <property type="match status" value="1"/>
</dbReference>
<dbReference type="Gene3D" id="1.10.10.60">
    <property type="entry name" value="Homeodomain-like"/>
    <property type="match status" value="2"/>
</dbReference>
<dbReference type="Gene3D" id="2.60.120.10">
    <property type="entry name" value="Jelly Rolls"/>
    <property type="match status" value="1"/>
</dbReference>
<dbReference type="HAMAP" id="MF_01533">
    <property type="entry name" value="HTH_type_RhaR"/>
    <property type="match status" value="1"/>
</dbReference>
<dbReference type="InterPro" id="IPR003313">
    <property type="entry name" value="AraC-bd"/>
</dbReference>
<dbReference type="InterPro" id="IPR009057">
    <property type="entry name" value="Homeodomain-like_sf"/>
</dbReference>
<dbReference type="InterPro" id="IPR037923">
    <property type="entry name" value="HTH-like"/>
</dbReference>
<dbReference type="InterPro" id="IPR018060">
    <property type="entry name" value="HTH_AraC"/>
</dbReference>
<dbReference type="InterPro" id="IPR018062">
    <property type="entry name" value="HTH_AraC-typ_CS"/>
</dbReference>
<dbReference type="InterPro" id="IPR047220">
    <property type="entry name" value="RhaR_RhaS-like_N"/>
</dbReference>
<dbReference type="InterPro" id="IPR014710">
    <property type="entry name" value="RmlC-like_jellyroll"/>
</dbReference>
<dbReference type="InterPro" id="IPR023699">
    <property type="entry name" value="Tscrpt_act_RhaR"/>
</dbReference>
<dbReference type="InterPro" id="IPR020449">
    <property type="entry name" value="Tscrpt_reg_AraC-type_HTH"/>
</dbReference>
<dbReference type="NCBIfam" id="NF010025">
    <property type="entry name" value="PRK13500.1"/>
    <property type="match status" value="1"/>
</dbReference>
<dbReference type="NCBIfam" id="NF010026">
    <property type="entry name" value="PRK13501.1"/>
    <property type="match status" value="1"/>
</dbReference>
<dbReference type="NCBIfam" id="NF010027">
    <property type="entry name" value="PRK13502.1"/>
    <property type="match status" value="1"/>
</dbReference>
<dbReference type="PANTHER" id="PTHR43280">
    <property type="entry name" value="ARAC-FAMILY TRANSCRIPTIONAL REGULATOR"/>
    <property type="match status" value="1"/>
</dbReference>
<dbReference type="PANTHER" id="PTHR43280:SF13">
    <property type="entry name" value="HTH-TYPE TRANSCRIPTIONAL ACTIVATOR RHAR"/>
    <property type="match status" value="1"/>
</dbReference>
<dbReference type="Pfam" id="PF02311">
    <property type="entry name" value="AraC_binding"/>
    <property type="match status" value="1"/>
</dbReference>
<dbReference type="Pfam" id="PF12833">
    <property type="entry name" value="HTH_18"/>
    <property type="match status" value="1"/>
</dbReference>
<dbReference type="PRINTS" id="PR00032">
    <property type="entry name" value="HTHARAC"/>
</dbReference>
<dbReference type="SMART" id="SM00342">
    <property type="entry name" value="HTH_ARAC"/>
    <property type="match status" value="1"/>
</dbReference>
<dbReference type="SUPFAM" id="SSF46689">
    <property type="entry name" value="Homeodomain-like"/>
    <property type="match status" value="2"/>
</dbReference>
<dbReference type="SUPFAM" id="SSF51215">
    <property type="entry name" value="Regulatory protein AraC"/>
    <property type="match status" value="1"/>
</dbReference>
<dbReference type="PROSITE" id="PS00041">
    <property type="entry name" value="HTH_ARAC_FAMILY_1"/>
    <property type="match status" value="1"/>
</dbReference>
<dbReference type="PROSITE" id="PS01124">
    <property type="entry name" value="HTH_ARAC_FAMILY_2"/>
    <property type="match status" value="1"/>
</dbReference>
<gene>
    <name evidence="1" type="primary">rhaR</name>
    <name type="ordered locus">SDY_3840</name>
</gene>
<reference key="1">
    <citation type="journal article" date="2005" name="Nucleic Acids Res.">
        <title>Genome dynamics and diversity of Shigella species, the etiologic agents of bacillary dysentery.</title>
        <authorList>
            <person name="Yang F."/>
            <person name="Yang J."/>
            <person name="Zhang X."/>
            <person name="Chen L."/>
            <person name="Jiang Y."/>
            <person name="Yan Y."/>
            <person name="Tang X."/>
            <person name="Wang J."/>
            <person name="Xiong Z."/>
            <person name="Dong J."/>
            <person name="Xue Y."/>
            <person name="Zhu Y."/>
            <person name="Xu X."/>
            <person name="Sun L."/>
            <person name="Chen S."/>
            <person name="Nie H."/>
            <person name="Peng J."/>
            <person name="Xu J."/>
            <person name="Wang Y."/>
            <person name="Yuan Z."/>
            <person name="Wen Y."/>
            <person name="Yao Z."/>
            <person name="Shen Y."/>
            <person name="Qiang B."/>
            <person name="Hou Y."/>
            <person name="Yu J."/>
            <person name="Jin Q."/>
        </authorList>
    </citation>
    <scope>NUCLEOTIDE SEQUENCE [LARGE SCALE GENOMIC DNA]</scope>
    <source>
        <strain>Sd197</strain>
    </source>
</reference>
<evidence type="ECO:0000255" key="1">
    <source>
        <dbReference type="HAMAP-Rule" id="MF_01533"/>
    </source>
</evidence>
<evidence type="ECO:0000305" key="2"/>
<sequence length="282" mass="32363">MVHQLKLLKDDFFASDQQAVAVADCYPQDVFAEHTHDFCELVIVWRGNGLHVLNDRPYRITRGDLFYIHADDKHSYASVNDLVLQNIIYCPERLKLNLDWQGAIPGFSVSAGQPHWRLGSMGMAQARQIIGQLEHESSQHVPFANEMAELLFGQLVMLLNRHRYTSDSLPPTSSETLLDKLITRLAASLKSPFALDKFCDEASCSERVLRQQFRQQTGMTINQYLRQVRVCHAQYLLQHSRLLISDISTECGFEDSNYFSVVFTRETGMTPSQWRHLNSQKD</sequence>
<organism>
    <name type="scientific">Shigella dysenteriae serotype 1 (strain Sd197)</name>
    <dbReference type="NCBI Taxonomy" id="300267"/>
    <lineage>
        <taxon>Bacteria</taxon>
        <taxon>Pseudomonadati</taxon>
        <taxon>Pseudomonadota</taxon>
        <taxon>Gammaproteobacteria</taxon>
        <taxon>Enterobacterales</taxon>
        <taxon>Enterobacteriaceae</taxon>
        <taxon>Shigella</taxon>
    </lineage>
</organism>
<feature type="chain" id="PRO_0000292775" description="HTH-type transcriptional activator RhaR">
    <location>
        <begin position="1"/>
        <end position="282"/>
    </location>
</feature>
<feature type="domain" description="HTH araC/xylS-type" evidence="1">
    <location>
        <begin position="179"/>
        <end position="277"/>
    </location>
</feature>
<feature type="DNA-binding region" description="H-T-H motif" evidence="1">
    <location>
        <begin position="196"/>
        <end position="217"/>
    </location>
</feature>
<feature type="DNA-binding region" description="H-T-H motif" evidence="1">
    <location>
        <begin position="244"/>
        <end position="267"/>
    </location>
</feature>
<feature type="site" description="Interaction with sigma-70" evidence="1">
    <location>
        <position position="246"/>
    </location>
</feature>
<name>RHAR_SHIDS</name>
<protein>
    <recommendedName>
        <fullName evidence="1">HTH-type transcriptional activator RhaR</fullName>
    </recommendedName>
    <alternativeName>
        <fullName evidence="1">L-rhamnose operon transcriptional activator RhaR</fullName>
    </alternativeName>
</protein>
<proteinExistence type="inferred from homology"/>
<keyword id="KW-0010">Activator</keyword>
<keyword id="KW-0963">Cytoplasm</keyword>
<keyword id="KW-0238">DNA-binding</keyword>
<keyword id="KW-1185">Reference proteome</keyword>
<keyword id="KW-0677">Repeat</keyword>
<keyword id="KW-0684">Rhamnose metabolism</keyword>
<keyword id="KW-0804">Transcription</keyword>
<keyword id="KW-0805">Transcription regulation</keyword>